<protein>
    <recommendedName>
        <fullName evidence="1">Large ribosomal subunit protein uL6</fullName>
    </recommendedName>
    <alternativeName>
        <fullName evidence="2">50S ribosomal protein L6</fullName>
    </alternativeName>
</protein>
<organism>
    <name type="scientific">Synechococcus sp. (strain JA-2-3B'a(2-13))</name>
    <name type="common">Cyanobacteria bacterium Yellowstone B-Prime</name>
    <dbReference type="NCBI Taxonomy" id="321332"/>
    <lineage>
        <taxon>Bacteria</taxon>
        <taxon>Bacillati</taxon>
        <taxon>Cyanobacteriota</taxon>
        <taxon>Cyanophyceae</taxon>
        <taxon>Synechococcales</taxon>
        <taxon>Synechococcaceae</taxon>
        <taxon>Synechococcus</taxon>
    </lineage>
</organism>
<name>RL6_SYNJB</name>
<dbReference type="EMBL" id="CP000240">
    <property type="protein sequence ID" value="ABD03541.1"/>
    <property type="molecule type" value="Genomic_DNA"/>
</dbReference>
<dbReference type="RefSeq" id="WP_011434166.1">
    <property type="nucleotide sequence ID" value="NC_007776.1"/>
</dbReference>
<dbReference type="SMR" id="Q2JIL3"/>
<dbReference type="STRING" id="321332.CYB_2611"/>
<dbReference type="KEGG" id="cyb:CYB_2611"/>
<dbReference type="eggNOG" id="COG0097">
    <property type="taxonomic scope" value="Bacteria"/>
</dbReference>
<dbReference type="HOGENOM" id="CLU_065464_1_2_3"/>
<dbReference type="OrthoDB" id="9805007at2"/>
<dbReference type="Proteomes" id="UP000001938">
    <property type="component" value="Chromosome"/>
</dbReference>
<dbReference type="GO" id="GO:0022625">
    <property type="term" value="C:cytosolic large ribosomal subunit"/>
    <property type="evidence" value="ECO:0007669"/>
    <property type="project" value="TreeGrafter"/>
</dbReference>
<dbReference type="GO" id="GO:0019843">
    <property type="term" value="F:rRNA binding"/>
    <property type="evidence" value="ECO:0007669"/>
    <property type="project" value="UniProtKB-UniRule"/>
</dbReference>
<dbReference type="GO" id="GO:0003735">
    <property type="term" value="F:structural constituent of ribosome"/>
    <property type="evidence" value="ECO:0007669"/>
    <property type="project" value="InterPro"/>
</dbReference>
<dbReference type="GO" id="GO:0002181">
    <property type="term" value="P:cytoplasmic translation"/>
    <property type="evidence" value="ECO:0007669"/>
    <property type="project" value="TreeGrafter"/>
</dbReference>
<dbReference type="FunFam" id="3.90.930.12:FF:000001">
    <property type="entry name" value="50S ribosomal protein L6"/>
    <property type="match status" value="1"/>
</dbReference>
<dbReference type="FunFam" id="3.90.930.12:FF:000002">
    <property type="entry name" value="50S ribosomal protein L6"/>
    <property type="match status" value="1"/>
</dbReference>
<dbReference type="Gene3D" id="3.90.930.12">
    <property type="entry name" value="Ribosomal protein L6, alpha-beta domain"/>
    <property type="match status" value="2"/>
</dbReference>
<dbReference type="HAMAP" id="MF_01365_B">
    <property type="entry name" value="Ribosomal_uL6_B"/>
    <property type="match status" value="1"/>
</dbReference>
<dbReference type="InterPro" id="IPR000702">
    <property type="entry name" value="Ribosomal_uL6-like"/>
</dbReference>
<dbReference type="InterPro" id="IPR036789">
    <property type="entry name" value="Ribosomal_uL6-like_a/b-dom_sf"/>
</dbReference>
<dbReference type="InterPro" id="IPR020040">
    <property type="entry name" value="Ribosomal_uL6_a/b-dom"/>
</dbReference>
<dbReference type="InterPro" id="IPR019906">
    <property type="entry name" value="Ribosomal_uL6_bac-type"/>
</dbReference>
<dbReference type="InterPro" id="IPR002358">
    <property type="entry name" value="Ribosomal_uL6_CS"/>
</dbReference>
<dbReference type="NCBIfam" id="TIGR03654">
    <property type="entry name" value="L6_bact"/>
    <property type="match status" value="1"/>
</dbReference>
<dbReference type="PANTHER" id="PTHR11655">
    <property type="entry name" value="60S/50S RIBOSOMAL PROTEIN L6/L9"/>
    <property type="match status" value="1"/>
</dbReference>
<dbReference type="PANTHER" id="PTHR11655:SF14">
    <property type="entry name" value="LARGE RIBOSOMAL SUBUNIT PROTEIN UL6M"/>
    <property type="match status" value="1"/>
</dbReference>
<dbReference type="Pfam" id="PF00347">
    <property type="entry name" value="Ribosomal_L6"/>
    <property type="match status" value="2"/>
</dbReference>
<dbReference type="PIRSF" id="PIRSF002162">
    <property type="entry name" value="Ribosomal_L6"/>
    <property type="match status" value="1"/>
</dbReference>
<dbReference type="PRINTS" id="PR00059">
    <property type="entry name" value="RIBOSOMALL6"/>
</dbReference>
<dbReference type="SUPFAM" id="SSF56053">
    <property type="entry name" value="Ribosomal protein L6"/>
    <property type="match status" value="2"/>
</dbReference>
<dbReference type="PROSITE" id="PS00525">
    <property type="entry name" value="RIBOSOMAL_L6_1"/>
    <property type="match status" value="1"/>
</dbReference>
<accession>Q2JIL3</accession>
<gene>
    <name evidence="1" type="primary">rplF</name>
    <name evidence="1" type="synonym">rpl6</name>
    <name type="ordered locus">CYB_2611</name>
</gene>
<proteinExistence type="inferred from homology"/>
<evidence type="ECO:0000255" key="1">
    <source>
        <dbReference type="HAMAP-Rule" id="MF_01365"/>
    </source>
</evidence>
<evidence type="ECO:0000305" key="2"/>
<feature type="chain" id="PRO_0000260962" description="Large ribosomal subunit protein uL6">
    <location>
        <begin position="1"/>
        <end position="181"/>
    </location>
</feature>
<sequence length="181" mass="19609">MSRIGRRPIALPAKVEIQIDGQHIAVKGPKGQLSRSLPPLITVQQNAQMLTVSRLNDSRPARQLHGLCRTLVANMVDGVSKGFERRLELVGVGYRAAIQGSKLVLNVGYSHPVEIPFPPGIQIAVEGNNIIVVSGTDKELVGNTAARIRAVRPPEPYKGKGIRYLGEQVRRKAGKSGKAKK</sequence>
<comment type="function">
    <text evidence="1">This protein binds to the 23S rRNA, and is important in its secondary structure. It is located near the subunit interface in the base of the L7/L12 stalk, and near the tRNA binding site of the peptidyltransferase center.</text>
</comment>
<comment type="subunit">
    <text evidence="1">Part of the 50S ribosomal subunit.</text>
</comment>
<comment type="similarity">
    <text evidence="1">Belongs to the universal ribosomal protein uL6 family.</text>
</comment>
<keyword id="KW-1185">Reference proteome</keyword>
<keyword id="KW-0687">Ribonucleoprotein</keyword>
<keyword id="KW-0689">Ribosomal protein</keyword>
<keyword id="KW-0694">RNA-binding</keyword>
<keyword id="KW-0699">rRNA-binding</keyword>
<reference key="1">
    <citation type="journal article" date="2007" name="ISME J.">
        <title>Population level functional diversity in a microbial community revealed by comparative genomic and metagenomic analyses.</title>
        <authorList>
            <person name="Bhaya D."/>
            <person name="Grossman A.R."/>
            <person name="Steunou A.-S."/>
            <person name="Khuri N."/>
            <person name="Cohan F.M."/>
            <person name="Hamamura N."/>
            <person name="Melendrez M.C."/>
            <person name="Bateson M.M."/>
            <person name="Ward D.M."/>
            <person name="Heidelberg J.F."/>
        </authorList>
    </citation>
    <scope>NUCLEOTIDE SEQUENCE [LARGE SCALE GENOMIC DNA]</scope>
    <source>
        <strain>JA-2-3B'a(2-13)</strain>
    </source>
</reference>